<reference key="1">
    <citation type="submission" date="2007-03" db="EMBL/GenBank/DDBJ databases">
        <title>Sequencing analysis of Draba nemoroza chloroplast DNA.</title>
        <authorList>
            <person name="Hosouchi T."/>
            <person name="Tsuruoka H."/>
            <person name="Kotani H."/>
        </authorList>
    </citation>
    <scope>NUCLEOTIDE SEQUENCE [LARGE SCALE GENOMIC DNA]</scope>
</reference>
<gene>
    <name type="primary">ndhF</name>
</gene>
<feature type="chain" id="PRO_0000360932" description="NAD(P)H-quinone oxidoreductase subunit 5, chloroplastic">
    <location>
        <begin position="1"/>
        <end position="746"/>
    </location>
</feature>
<feature type="transmembrane region" description="Helical" evidence="2">
    <location>
        <begin position="9"/>
        <end position="29"/>
    </location>
</feature>
<feature type="transmembrane region" description="Helical" evidence="2">
    <location>
        <begin position="40"/>
        <end position="60"/>
    </location>
</feature>
<feature type="transmembrane region" description="Helical" evidence="2">
    <location>
        <begin position="89"/>
        <end position="109"/>
    </location>
</feature>
<feature type="transmembrane region" description="Helical" evidence="2">
    <location>
        <begin position="125"/>
        <end position="145"/>
    </location>
</feature>
<feature type="transmembrane region" description="Helical" evidence="2">
    <location>
        <begin position="147"/>
        <end position="167"/>
    </location>
</feature>
<feature type="transmembrane region" description="Helical" evidence="2">
    <location>
        <begin position="185"/>
        <end position="205"/>
    </location>
</feature>
<feature type="transmembrane region" description="Helical" evidence="2">
    <location>
        <begin position="221"/>
        <end position="241"/>
    </location>
</feature>
<feature type="transmembrane region" description="Helical" evidence="2">
    <location>
        <begin position="258"/>
        <end position="278"/>
    </location>
</feature>
<feature type="transmembrane region" description="Helical" evidence="2">
    <location>
        <begin position="280"/>
        <end position="300"/>
    </location>
</feature>
<feature type="transmembrane region" description="Helical" evidence="2">
    <location>
        <begin position="327"/>
        <end position="347"/>
    </location>
</feature>
<feature type="transmembrane region" description="Helical" evidence="2">
    <location>
        <begin position="354"/>
        <end position="374"/>
    </location>
</feature>
<feature type="transmembrane region" description="Helical" evidence="2">
    <location>
        <begin position="396"/>
        <end position="416"/>
    </location>
</feature>
<feature type="transmembrane region" description="Helical" evidence="2">
    <location>
        <begin position="425"/>
        <end position="445"/>
    </location>
</feature>
<feature type="transmembrane region" description="Helical" evidence="2">
    <location>
        <begin position="547"/>
        <end position="567"/>
    </location>
</feature>
<feature type="transmembrane region" description="Helical" evidence="2">
    <location>
        <begin position="608"/>
        <end position="628"/>
    </location>
</feature>
<feature type="transmembrane region" description="Helical" evidence="2">
    <location>
        <begin position="722"/>
        <end position="742"/>
    </location>
</feature>
<evidence type="ECO:0000250" key="1"/>
<evidence type="ECO:0000255" key="2"/>
<evidence type="ECO:0000305" key="3"/>
<organism>
    <name type="scientific">Draba nemorosa</name>
    <name type="common">Woodland whitlowgrass</name>
    <dbReference type="NCBI Taxonomy" id="171822"/>
    <lineage>
        <taxon>Eukaryota</taxon>
        <taxon>Viridiplantae</taxon>
        <taxon>Streptophyta</taxon>
        <taxon>Embryophyta</taxon>
        <taxon>Tracheophyta</taxon>
        <taxon>Spermatophyta</taxon>
        <taxon>Magnoliopsida</taxon>
        <taxon>eudicotyledons</taxon>
        <taxon>Gunneridae</taxon>
        <taxon>Pentapetalae</taxon>
        <taxon>rosids</taxon>
        <taxon>malvids</taxon>
        <taxon>Brassicales</taxon>
        <taxon>Brassicaceae</taxon>
        <taxon>Arabideae</taxon>
        <taxon>Draba</taxon>
    </lineage>
</organism>
<accession>A4QL68</accession>
<proteinExistence type="inferred from homology"/>
<geneLocation type="chloroplast"/>
<comment type="function">
    <text evidence="1">NDH shuttles electrons from NAD(P)H:plastoquinone, via FMN and iron-sulfur (Fe-S) centers, to quinones in the photosynthetic chain and possibly in a chloroplast respiratory chain. The immediate electron acceptor for the enzyme in this species is believed to be plastoquinone. Couples the redox reaction to proton translocation, and thus conserves the redox energy in a proton gradient (By similarity).</text>
</comment>
<comment type="catalytic activity">
    <reaction>
        <text>a plastoquinone + NADH + (n+1) H(+)(in) = a plastoquinol + NAD(+) + n H(+)(out)</text>
        <dbReference type="Rhea" id="RHEA:42608"/>
        <dbReference type="Rhea" id="RHEA-COMP:9561"/>
        <dbReference type="Rhea" id="RHEA-COMP:9562"/>
        <dbReference type="ChEBI" id="CHEBI:15378"/>
        <dbReference type="ChEBI" id="CHEBI:17757"/>
        <dbReference type="ChEBI" id="CHEBI:57540"/>
        <dbReference type="ChEBI" id="CHEBI:57945"/>
        <dbReference type="ChEBI" id="CHEBI:62192"/>
    </reaction>
</comment>
<comment type="catalytic activity">
    <reaction>
        <text>a plastoquinone + NADPH + (n+1) H(+)(in) = a plastoquinol + NADP(+) + n H(+)(out)</text>
        <dbReference type="Rhea" id="RHEA:42612"/>
        <dbReference type="Rhea" id="RHEA-COMP:9561"/>
        <dbReference type="Rhea" id="RHEA-COMP:9562"/>
        <dbReference type="ChEBI" id="CHEBI:15378"/>
        <dbReference type="ChEBI" id="CHEBI:17757"/>
        <dbReference type="ChEBI" id="CHEBI:57783"/>
        <dbReference type="ChEBI" id="CHEBI:58349"/>
        <dbReference type="ChEBI" id="CHEBI:62192"/>
    </reaction>
</comment>
<comment type="subunit">
    <text evidence="1">NDH is composed of at least 16 different subunits, 5 of which are encoded in the nucleus.</text>
</comment>
<comment type="subcellular location">
    <subcellularLocation>
        <location evidence="1">Plastid</location>
        <location evidence="1">Chloroplast thylakoid membrane</location>
        <topology evidence="1">Multi-pass membrane protein</topology>
    </subcellularLocation>
</comment>
<comment type="similarity">
    <text evidence="3">Belongs to the complex I subunit 5 family.</text>
</comment>
<dbReference type="EC" id="7.1.1.-"/>
<dbReference type="EMBL" id="AP009373">
    <property type="protein sequence ID" value="BAF50423.1"/>
    <property type="molecule type" value="Genomic_DNA"/>
</dbReference>
<dbReference type="RefSeq" id="YP_001123598.1">
    <property type="nucleotide sequence ID" value="NC_009272.1"/>
</dbReference>
<dbReference type="SMR" id="A4QL68"/>
<dbReference type="GeneID" id="4964685"/>
<dbReference type="GO" id="GO:0009535">
    <property type="term" value="C:chloroplast thylakoid membrane"/>
    <property type="evidence" value="ECO:0007669"/>
    <property type="project" value="UniProtKB-SubCell"/>
</dbReference>
<dbReference type="GO" id="GO:0008137">
    <property type="term" value="F:NADH dehydrogenase (ubiquinone) activity"/>
    <property type="evidence" value="ECO:0007669"/>
    <property type="project" value="InterPro"/>
</dbReference>
<dbReference type="GO" id="GO:0048038">
    <property type="term" value="F:quinone binding"/>
    <property type="evidence" value="ECO:0007669"/>
    <property type="project" value="UniProtKB-KW"/>
</dbReference>
<dbReference type="GO" id="GO:0042773">
    <property type="term" value="P:ATP synthesis coupled electron transport"/>
    <property type="evidence" value="ECO:0007669"/>
    <property type="project" value="InterPro"/>
</dbReference>
<dbReference type="GO" id="GO:0015990">
    <property type="term" value="P:electron transport coupled proton transport"/>
    <property type="evidence" value="ECO:0007669"/>
    <property type="project" value="TreeGrafter"/>
</dbReference>
<dbReference type="Gene3D" id="1.20.5.2700">
    <property type="match status" value="1"/>
</dbReference>
<dbReference type="InterPro" id="IPR002128">
    <property type="entry name" value="NADH_UbQ_OxRdtase_chlpt_su5_C"/>
</dbReference>
<dbReference type="InterPro" id="IPR018393">
    <property type="entry name" value="NADHpl_OxRdtase_5_subgr"/>
</dbReference>
<dbReference type="InterPro" id="IPR001750">
    <property type="entry name" value="ND/Mrp_TM"/>
</dbReference>
<dbReference type="InterPro" id="IPR003945">
    <property type="entry name" value="NU5C-like"/>
</dbReference>
<dbReference type="InterPro" id="IPR001516">
    <property type="entry name" value="Proton_antipo_N"/>
</dbReference>
<dbReference type="NCBIfam" id="TIGR01974">
    <property type="entry name" value="NDH_I_L"/>
    <property type="match status" value="1"/>
</dbReference>
<dbReference type="NCBIfam" id="NF005141">
    <property type="entry name" value="PRK06590.1"/>
    <property type="match status" value="1"/>
</dbReference>
<dbReference type="PANTHER" id="PTHR42829">
    <property type="entry name" value="NADH-UBIQUINONE OXIDOREDUCTASE CHAIN 5"/>
    <property type="match status" value="1"/>
</dbReference>
<dbReference type="PANTHER" id="PTHR42829:SF2">
    <property type="entry name" value="NADH-UBIQUINONE OXIDOREDUCTASE CHAIN 5"/>
    <property type="match status" value="1"/>
</dbReference>
<dbReference type="Pfam" id="PF01010">
    <property type="entry name" value="Proton_antipo_C"/>
    <property type="match status" value="1"/>
</dbReference>
<dbReference type="Pfam" id="PF00361">
    <property type="entry name" value="Proton_antipo_M"/>
    <property type="match status" value="1"/>
</dbReference>
<dbReference type="Pfam" id="PF00662">
    <property type="entry name" value="Proton_antipo_N"/>
    <property type="match status" value="1"/>
</dbReference>
<dbReference type="PRINTS" id="PR01434">
    <property type="entry name" value="NADHDHGNASE5"/>
</dbReference>
<dbReference type="PRINTS" id="PR01435">
    <property type="entry name" value="NPOXDRDTASE5"/>
</dbReference>
<name>NU5C_DRANE</name>
<sequence>MEHTYQYSWIIPFIPLPVPILLGIGLLLFPTVTKSLRRMWTFLSIFLLSIVMIFSVYLSIQQIFLSCIHQNVWSWTINNEFSFEFGYFIDPLTSIMLILITTVGILVLIYSDNYMAHDQGYLRFFAYLGFFTTSMLGLVTSSNLIQVYFFWELVGMCSYLLIGFWFTRPIAANACQKAFVTNRVGDFGLLLGILGLYWITGSFEFQDLFEIVNNLILNNRVNLLFLTLCAFLLFVGPIAKSAQFPLHVWLPDAMEGPTPISALIHAATMVAAGIFLVARLLPLFIVIPSIMYIISLIGIITVLLGATLALAQKDIKRGLAYSTMSQLGYMMLALGMGSYRPALFHLITHAYSKALLFLGSGSIIHSMEAIVGYSPDKSQNMILMGGLTKHVPITKTAFLIGTLSLCGIPPLAWFWSKDEILNDSLLFSPIFAIIACSTAGLTAFYMFRIYLLTFEGHLNTYFINYSGKKSSSFYSISLWGKAEEKKLNRNFELVPLLTMNNTKRVSFFGKKTYKISNNVTNQTFITVENFGLNTRTFYYPQESDNTILFPMLVLLLFTLFVGTIGIPFNQEGLDFDILSKLLTPSINLLHKNSQNFVDWYEFLQNATFSVSIALFGIFIAYCLYKPFYSSLLNLTLLNSFKTWSSKRIRWEKLINLVYNWSYNRGYIDAFFKTSLTENIRRLAKQMNFFDKRIIDGITNGVGITSFFVGEVTKYISGSRISFYLFLYLSYVFIFLMILFFFYFEKF</sequence>
<keyword id="KW-0150">Chloroplast</keyword>
<keyword id="KW-0472">Membrane</keyword>
<keyword id="KW-0520">NAD</keyword>
<keyword id="KW-0521">NADP</keyword>
<keyword id="KW-0934">Plastid</keyword>
<keyword id="KW-0618">Plastoquinone</keyword>
<keyword id="KW-0874">Quinone</keyword>
<keyword id="KW-0793">Thylakoid</keyword>
<keyword id="KW-1278">Translocase</keyword>
<keyword id="KW-0812">Transmembrane</keyword>
<keyword id="KW-1133">Transmembrane helix</keyword>
<keyword id="KW-0813">Transport</keyword>
<protein>
    <recommendedName>
        <fullName>NAD(P)H-quinone oxidoreductase subunit 5, chloroplastic</fullName>
        <ecNumber>7.1.1.-</ecNumber>
    </recommendedName>
    <alternativeName>
        <fullName>NAD(P)H dehydrogenase subunit 5</fullName>
    </alternativeName>
    <alternativeName>
        <fullName>NADH-plastoquinone oxidoreductase subunit 5</fullName>
    </alternativeName>
</protein>